<keyword id="KW-0002">3D-structure</keyword>
<keyword id="KW-0961">Cell wall biogenesis/degradation</keyword>
<keyword id="KW-0548">Nucleotidyltransferase</keyword>
<keyword id="KW-0777">Teichoic acid biosynthesis</keyword>
<keyword id="KW-0808">Transferase</keyword>
<sequence length="237" mass="26848">MIYAEILAGGKGSRMGNVNMPKQFLPLNKRPIIIHTVEKFLLNDRFDKILIVSPKEWINHTKDILKKFIGQDDRLVVVEGGSDRNESIMSGIRYIEKEFGIQDNDVIITHDSVRPFLTHRIIDENIDAVLQYGAVDTVISAIDTIIASEDQEFISDIPVRDNMYQGQTPQSFRISKLVELYNKLSDEQKAVLTDACKICSLAGEKVKLVRGEVFNIKVTTPYDLKVANAILQERISQ</sequence>
<gene>
    <name evidence="2 3" type="primary">tarI</name>
    <name type="synonym">ispD</name>
    <name type="ordered locus">BSUW23_17565</name>
</gene>
<feature type="chain" id="PRO_0000075685" description="Ribitol-5-phosphate cytidylyltransferase">
    <location>
        <begin position="1"/>
        <end position="237"/>
    </location>
</feature>
<feature type="binding site" evidence="2">
    <location>
        <begin position="7"/>
        <end position="10"/>
    </location>
    <ligand>
        <name>CTP</name>
        <dbReference type="ChEBI" id="CHEBI:37563"/>
    </ligand>
</feature>
<feature type="binding site" evidence="2">
    <location>
        <begin position="81"/>
        <end position="87"/>
    </location>
    <ligand>
        <name>CTP</name>
        <dbReference type="ChEBI" id="CHEBI:37563"/>
    </ligand>
</feature>
<feature type="binding site" evidence="2">
    <location>
        <position position="112"/>
    </location>
    <ligand>
        <name>CTP</name>
        <dbReference type="ChEBI" id="CHEBI:37563"/>
    </ligand>
</feature>
<feature type="site" description="Transition state stabilizer" evidence="2">
    <location>
        <position position="14"/>
    </location>
</feature>
<feature type="site" description="Transition state stabilizer" evidence="2">
    <location>
        <position position="22"/>
    </location>
</feature>
<feature type="site" description="Positions ribitol 5-phosphate for the nucleophilic attack" evidence="2">
    <location>
        <position position="160"/>
    </location>
</feature>
<feature type="site" description="Positions ribitol 5-phosphate for the nucleophilic attack" evidence="2">
    <location>
        <position position="217"/>
    </location>
</feature>
<feature type="strand" evidence="5">
    <location>
        <begin position="2"/>
        <end position="7"/>
    </location>
</feature>
<feature type="helix" evidence="5">
    <location>
        <begin position="22"/>
        <end position="24"/>
    </location>
</feature>
<feature type="strand" evidence="5">
    <location>
        <begin position="25"/>
        <end position="27"/>
    </location>
</feature>
<feature type="helix" evidence="5">
    <location>
        <begin position="32"/>
        <end position="41"/>
    </location>
</feature>
<feature type="strand" evidence="5">
    <location>
        <begin position="47"/>
        <end position="53"/>
    </location>
</feature>
<feature type="helix" evidence="5">
    <location>
        <begin position="55"/>
        <end position="57"/>
    </location>
</feature>
<feature type="helix" evidence="5">
    <location>
        <begin position="58"/>
        <end position="68"/>
    </location>
</feature>
<feature type="strand" evidence="5">
    <location>
        <begin position="75"/>
        <end position="79"/>
    </location>
</feature>
<feature type="helix" evidence="5">
    <location>
        <begin position="84"/>
        <end position="98"/>
    </location>
</feature>
<feature type="strand" evidence="5">
    <location>
        <begin position="106"/>
        <end position="111"/>
    </location>
</feature>
<feature type="helix" evidence="5">
    <location>
        <begin position="119"/>
        <end position="132"/>
    </location>
</feature>
<feature type="strand" evidence="5">
    <location>
        <begin position="133"/>
        <end position="140"/>
    </location>
</feature>
<feature type="strand" evidence="5">
    <location>
        <begin position="145"/>
        <end position="147"/>
    </location>
</feature>
<feature type="strand" evidence="5">
    <location>
        <begin position="149"/>
        <end position="153"/>
    </location>
</feature>
<feature type="strand" evidence="5">
    <location>
        <begin position="163"/>
        <end position="173"/>
    </location>
</feature>
<feature type="helix" evidence="5">
    <location>
        <begin position="174"/>
        <end position="183"/>
    </location>
</feature>
<feature type="helix" evidence="5">
    <location>
        <begin position="195"/>
        <end position="201"/>
    </location>
</feature>
<feature type="strand" evidence="5">
    <location>
        <begin position="207"/>
        <end position="210"/>
    </location>
</feature>
<feature type="helix" evidence="5">
    <location>
        <begin position="221"/>
        <end position="230"/>
    </location>
</feature>
<comment type="function">
    <text evidence="1 2">Catalyzes the transfer of the cytidylyl group of CTP to D-ribitol 5-phosphate.</text>
</comment>
<comment type="catalytic activity">
    <reaction evidence="1 2">
        <text>D-ribitol 5-phosphate + CTP + H(+) = CDP-L-ribitol + diphosphate</text>
        <dbReference type="Rhea" id="RHEA:12456"/>
        <dbReference type="ChEBI" id="CHEBI:15378"/>
        <dbReference type="ChEBI" id="CHEBI:33019"/>
        <dbReference type="ChEBI" id="CHEBI:37563"/>
        <dbReference type="ChEBI" id="CHEBI:57608"/>
        <dbReference type="ChEBI" id="CHEBI:57695"/>
        <dbReference type="EC" id="2.7.7.40"/>
    </reaction>
</comment>
<comment type="pathway">
    <text evidence="2 3">Cell wall biogenesis; poly(ribitol phosphate) teichoic acid biosynthesis.</text>
</comment>
<comment type="similarity">
    <text evidence="2 4">Belongs to the IspD/TarI cytidylyltransferase family. TarI subfamily.</text>
</comment>
<organism>
    <name type="scientific">Bacillus spizizenii (strain ATCC 23059 / NRRL B-14472 / W23)</name>
    <name type="common">Bacillus subtilis subsp. spizizenii</name>
    <dbReference type="NCBI Taxonomy" id="655816"/>
    <lineage>
        <taxon>Bacteria</taxon>
        <taxon>Bacillati</taxon>
        <taxon>Bacillota</taxon>
        <taxon>Bacilli</taxon>
        <taxon>Bacillales</taxon>
        <taxon>Bacillaceae</taxon>
        <taxon>Bacillus</taxon>
    </lineage>
</organism>
<name>TARI_BACSH</name>
<accession>Q8RKI9</accession>
<accession>B7ZDK7</accession>
<accession>E0U4X7</accession>
<dbReference type="EC" id="2.7.7.40" evidence="1 2"/>
<dbReference type="EMBL" id="AJ313428">
    <property type="protein sequence ID" value="CAC86109.1"/>
    <property type="molecule type" value="Genomic_DNA"/>
</dbReference>
<dbReference type="EMBL" id="AM260209">
    <property type="protein sequence ID" value="CAJ97396.1"/>
    <property type="molecule type" value="Genomic_DNA"/>
</dbReference>
<dbReference type="EMBL" id="CP002183">
    <property type="protein sequence ID" value="ADM39548.1"/>
    <property type="molecule type" value="Genomic_DNA"/>
</dbReference>
<dbReference type="PDB" id="4JIS">
    <property type="method" value="X-ray"/>
    <property type="resolution" value="1.77 A"/>
    <property type="chains" value="A/B=1-237"/>
</dbReference>
<dbReference type="PDBsum" id="4JIS"/>
<dbReference type="SMR" id="Q8RKI9"/>
<dbReference type="KEGG" id="bss:BSUW23_17565"/>
<dbReference type="HOGENOM" id="CLU_061281_2_3_9"/>
<dbReference type="BioCyc" id="MetaCyc:MONOMER-19969"/>
<dbReference type="BRENDA" id="2.7.7.40">
    <property type="organism ID" value="658"/>
</dbReference>
<dbReference type="UniPathway" id="UPA00790"/>
<dbReference type="EvolutionaryTrace" id="Q8RKI9"/>
<dbReference type="Proteomes" id="UP000002233">
    <property type="component" value="Chromosome"/>
</dbReference>
<dbReference type="GO" id="GO:0050518">
    <property type="term" value="F:2-C-methyl-D-erythritol 4-phosphate cytidylyltransferase activity"/>
    <property type="evidence" value="ECO:0007669"/>
    <property type="project" value="TreeGrafter"/>
</dbReference>
<dbReference type="GO" id="GO:0047349">
    <property type="term" value="F:D-ribitol-5-phosphate cytidylyltransferase activity"/>
    <property type="evidence" value="ECO:0007669"/>
    <property type="project" value="UniProtKB-UniRule"/>
</dbReference>
<dbReference type="GO" id="GO:0071555">
    <property type="term" value="P:cell wall organization"/>
    <property type="evidence" value="ECO:0007669"/>
    <property type="project" value="UniProtKB-KW"/>
</dbReference>
<dbReference type="GO" id="GO:0008299">
    <property type="term" value="P:isoprenoid biosynthetic process"/>
    <property type="evidence" value="ECO:0007669"/>
    <property type="project" value="InterPro"/>
</dbReference>
<dbReference type="GO" id="GO:1902012">
    <property type="term" value="P:poly(ribitol phosphate) teichoic acid biosynthetic process"/>
    <property type="evidence" value="ECO:0007669"/>
    <property type="project" value="UniProtKB-UniRule"/>
</dbReference>
<dbReference type="CDD" id="cd02516">
    <property type="entry name" value="CDP-ME_synthetase"/>
    <property type="match status" value="1"/>
</dbReference>
<dbReference type="FunFam" id="3.90.550.10:FF:000003">
    <property type="entry name" value="2-C-methyl-D-erythritol 4-phosphate cytidylyltransferase"/>
    <property type="match status" value="1"/>
</dbReference>
<dbReference type="Gene3D" id="3.90.550.10">
    <property type="entry name" value="Spore Coat Polysaccharide Biosynthesis Protein SpsA, Chain A"/>
    <property type="match status" value="1"/>
</dbReference>
<dbReference type="HAMAP" id="MF_02068">
    <property type="entry name" value="TarI"/>
    <property type="match status" value="1"/>
</dbReference>
<dbReference type="InterPro" id="IPR034683">
    <property type="entry name" value="IspD/TarI"/>
</dbReference>
<dbReference type="InterPro" id="IPR050088">
    <property type="entry name" value="IspD/TarI_cytidylyltransf_bact"/>
</dbReference>
<dbReference type="InterPro" id="IPR018294">
    <property type="entry name" value="ISPD_synthase_CS"/>
</dbReference>
<dbReference type="InterPro" id="IPR029044">
    <property type="entry name" value="Nucleotide-diphossugar_trans"/>
</dbReference>
<dbReference type="InterPro" id="IPR034709">
    <property type="entry name" value="TarI"/>
</dbReference>
<dbReference type="NCBIfam" id="NF001183">
    <property type="entry name" value="PRK00155.1-3"/>
    <property type="match status" value="1"/>
</dbReference>
<dbReference type="PANTHER" id="PTHR32125">
    <property type="entry name" value="2-C-METHYL-D-ERYTHRITOL 4-PHOSPHATE CYTIDYLYLTRANSFERASE, CHLOROPLASTIC"/>
    <property type="match status" value="1"/>
</dbReference>
<dbReference type="PANTHER" id="PTHR32125:SF8">
    <property type="entry name" value="RIBITOL-5-PHOSPHATE CYTIDYLYLTRANSFERASE"/>
    <property type="match status" value="1"/>
</dbReference>
<dbReference type="Pfam" id="PF01128">
    <property type="entry name" value="IspD"/>
    <property type="match status" value="1"/>
</dbReference>
<dbReference type="SUPFAM" id="SSF53448">
    <property type="entry name" value="Nucleotide-diphospho-sugar transferases"/>
    <property type="match status" value="1"/>
</dbReference>
<dbReference type="PROSITE" id="PS01295">
    <property type="entry name" value="ISPD"/>
    <property type="match status" value="1"/>
</dbReference>
<protein>
    <recommendedName>
        <fullName evidence="1 2">Ribitol-5-phosphate cytidylyltransferase</fullName>
        <ecNumber evidence="1 2">2.7.7.40</ecNumber>
    </recommendedName>
</protein>
<proteinExistence type="evidence at protein level"/>
<reference key="1">
    <citation type="journal article" date="2002" name="Microbiology">
        <title>Comparison of ribitol and glycerol teichoic acid genes in Bacillus subtilis W23 and 168: identical function, similar divergent organization, but different regulation.</title>
        <authorList>
            <person name="Lazarevic V."/>
            <person name="Abellan F.-X."/>
            <person name="Beggah Moeller S."/>
            <person name="Karamata D."/>
            <person name="Maueel C."/>
        </authorList>
    </citation>
    <scope>NUCLEOTIDE SEQUENCE [GENOMIC DNA]</scope>
    <scope>PUTATIVE FUNCTION</scope>
    <source>
        <strain>ATCC 23059 / NRRL B-14472 / W23</strain>
    </source>
</reference>
<reference key="2">
    <citation type="submission" date="2006-04" db="EMBL/GenBank/DDBJ databases">
        <title>Minor teichoic acid of Bacillus subtilis W23.</title>
        <authorList>
            <person name="Soldo B."/>
            <person name="Freymond P.P."/>
            <person name="Karamata D."/>
            <person name="Lazarevic V."/>
        </authorList>
    </citation>
    <scope>NUCLEOTIDE SEQUENCE [GENOMIC DNA]</scope>
    <source>
        <strain>ATCC 23059 / NRRL B-14472 / W23</strain>
    </source>
</reference>
<reference key="3">
    <citation type="journal article" date="2011" name="Microbiology">
        <title>The genome sequence of Bacillus subtilis subsp. spizizenii W23: insights into speciation within the B. subtilis complex and into the history of B. subtilis genetics.</title>
        <authorList>
            <person name="Zeigler D.R."/>
        </authorList>
    </citation>
    <scope>NUCLEOTIDE SEQUENCE [LARGE SCALE GENOMIC DNA]</scope>
    <source>
        <strain>ATCC 23059 / NRRL B-14472 / W23</strain>
    </source>
</reference>
<evidence type="ECO:0000250" key="1">
    <source>
        <dbReference type="UniProtKB" id="Q8DPI2"/>
    </source>
</evidence>
<evidence type="ECO:0000255" key="2">
    <source>
        <dbReference type="HAMAP-Rule" id="MF_02068"/>
    </source>
</evidence>
<evidence type="ECO:0000303" key="3">
    <source>
    </source>
</evidence>
<evidence type="ECO:0000305" key="4"/>
<evidence type="ECO:0007829" key="5">
    <source>
        <dbReference type="PDB" id="4JIS"/>
    </source>
</evidence>